<evidence type="ECO:0000255" key="1">
    <source>
        <dbReference type="HAMAP-Rule" id="MF_00191"/>
    </source>
</evidence>
<reference key="1">
    <citation type="submission" date="2008-04" db="EMBL/GenBank/DDBJ databases">
        <title>Complete sequence of Yersinia pseudotuberculosis PB1/+.</title>
        <authorList>
            <person name="Copeland A."/>
            <person name="Lucas S."/>
            <person name="Lapidus A."/>
            <person name="Glavina del Rio T."/>
            <person name="Dalin E."/>
            <person name="Tice H."/>
            <person name="Bruce D."/>
            <person name="Goodwin L."/>
            <person name="Pitluck S."/>
            <person name="Munk A.C."/>
            <person name="Brettin T."/>
            <person name="Detter J.C."/>
            <person name="Han C."/>
            <person name="Tapia R."/>
            <person name="Schmutz J."/>
            <person name="Larimer F."/>
            <person name="Land M."/>
            <person name="Hauser L."/>
            <person name="Challacombe J.F."/>
            <person name="Green L."/>
            <person name="Lindler L.E."/>
            <person name="Nikolich M.P."/>
            <person name="Richardson P."/>
        </authorList>
    </citation>
    <scope>NUCLEOTIDE SEQUENCE [LARGE SCALE GENOMIC DNA]</scope>
    <source>
        <strain>PB1/+</strain>
    </source>
</reference>
<gene>
    <name evidence="1" type="primary">ispH</name>
    <name type="ordered locus">YPTS_0644</name>
</gene>
<protein>
    <recommendedName>
        <fullName evidence="1">4-hydroxy-3-methylbut-2-enyl diphosphate reductase</fullName>
        <shortName evidence="1">HMBPP reductase</shortName>
        <ecNumber evidence="1">1.17.7.4</ecNumber>
    </recommendedName>
</protein>
<accession>B2K3M9</accession>
<name>ISPH_YERPB</name>
<keyword id="KW-0004">4Fe-4S</keyword>
<keyword id="KW-0408">Iron</keyword>
<keyword id="KW-0411">Iron-sulfur</keyword>
<keyword id="KW-0414">Isoprene biosynthesis</keyword>
<keyword id="KW-0479">Metal-binding</keyword>
<keyword id="KW-0560">Oxidoreductase</keyword>
<comment type="function">
    <text evidence="1">Catalyzes the conversion of 1-hydroxy-2-methyl-2-(E)-butenyl 4-diphosphate (HMBPP) into a mixture of isopentenyl diphosphate (IPP) and dimethylallyl diphosphate (DMAPP). Acts in the terminal step of the DOXP/MEP pathway for isoprenoid precursor biosynthesis.</text>
</comment>
<comment type="catalytic activity">
    <reaction evidence="1">
        <text>isopentenyl diphosphate + 2 oxidized [2Fe-2S]-[ferredoxin] + H2O = (2E)-4-hydroxy-3-methylbut-2-enyl diphosphate + 2 reduced [2Fe-2S]-[ferredoxin] + 2 H(+)</text>
        <dbReference type="Rhea" id="RHEA:24488"/>
        <dbReference type="Rhea" id="RHEA-COMP:10000"/>
        <dbReference type="Rhea" id="RHEA-COMP:10001"/>
        <dbReference type="ChEBI" id="CHEBI:15377"/>
        <dbReference type="ChEBI" id="CHEBI:15378"/>
        <dbReference type="ChEBI" id="CHEBI:33737"/>
        <dbReference type="ChEBI" id="CHEBI:33738"/>
        <dbReference type="ChEBI" id="CHEBI:128753"/>
        <dbReference type="ChEBI" id="CHEBI:128769"/>
        <dbReference type="EC" id="1.17.7.4"/>
    </reaction>
</comment>
<comment type="catalytic activity">
    <reaction evidence="1">
        <text>dimethylallyl diphosphate + 2 oxidized [2Fe-2S]-[ferredoxin] + H2O = (2E)-4-hydroxy-3-methylbut-2-enyl diphosphate + 2 reduced [2Fe-2S]-[ferredoxin] + 2 H(+)</text>
        <dbReference type="Rhea" id="RHEA:24825"/>
        <dbReference type="Rhea" id="RHEA-COMP:10000"/>
        <dbReference type="Rhea" id="RHEA-COMP:10001"/>
        <dbReference type="ChEBI" id="CHEBI:15377"/>
        <dbReference type="ChEBI" id="CHEBI:15378"/>
        <dbReference type="ChEBI" id="CHEBI:33737"/>
        <dbReference type="ChEBI" id="CHEBI:33738"/>
        <dbReference type="ChEBI" id="CHEBI:57623"/>
        <dbReference type="ChEBI" id="CHEBI:128753"/>
        <dbReference type="EC" id="1.17.7.4"/>
    </reaction>
</comment>
<comment type="cofactor">
    <cofactor evidence="1">
        <name>[4Fe-4S] cluster</name>
        <dbReference type="ChEBI" id="CHEBI:49883"/>
    </cofactor>
    <text evidence="1">Binds 1 [4Fe-4S] cluster per subunit.</text>
</comment>
<comment type="pathway">
    <text evidence="1">Isoprenoid biosynthesis; dimethylallyl diphosphate biosynthesis; dimethylallyl diphosphate from (2E)-4-hydroxy-3-methylbutenyl diphosphate: step 1/1.</text>
</comment>
<comment type="pathway">
    <text evidence="1">Isoprenoid biosynthesis; isopentenyl diphosphate biosynthesis via DXP pathway; isopentenyl diphosphate from 1-deoxy-D-xylulose 5-phosphate: step 6/6.</text>
</comment>
<comment type="subunit">
    <text evidence="1">Homodimer.</text>
</comment>
<comment type="similarity">
    <text evidence="1">Belongs to the IspH family.</text>
</comment>
<proteinExistence type="inferred from homology"/>
<sequence>MQILLANPRGFCAGVDRAISIVERAIEMYGAPIYVRHEVVHNRYVVESLCERGAIFIEEISEVPDGSILIFSAHGVSQAVRAEARSRNLTMLFDATCPLVTKVHMEVARASRKGKEAILIGHAGHPEVEGTMGQYSNPNGGMYLVESPDDVWQLNVKDENNLCFMTQTTLSVDDTSAVIDALNTRFPKIVGPRKDDICYATTNRQEAVRNLANDADIVLVVGSKNSSNSNRLAELVQRMGKPAYLIDSAADIQEFWLQGAQCIGVTAGASAPDILVQQVIARLKDLGAGESIELSGREENIVFEVPKELRVEVKQID</sequence>
<dbReference type="EC" id="1.17.7.4" evidence="1"/>
<dbReference type="EMBL" id="CP001048">
    <property type="protein sequence ID" value="ACC87628.1"/>
    <property type="molecule type" value="Genomic_DNA"/>
</dbReference>
<dbReference type="RefSeq" id="WP_011191701.1">
    <property type="nucleotide sequence ID" value="NZ_CP009780.1"/>
</dbReference>
<dbReference type="SMR" id="B2K3M9"/>
<dbReference type="GeneID" id="49787377"/>
<dbReference type="KEGG" id="ypb:YPTS_0644"/>
<dbReference type="PATRIC" id="fig|502801.10.peg.4326"/>
<dbReference type="UniPathway" id="UPA00056">
    <property type="reaction ID" value="UER00097"/>
</dbReference>
<dbReference type="UniPathway" id="UPA00059">
    <property type="reaction ID" value="UER00105"/>
</dbReference>
<dbReference type="GO" id="GO:0051539">
    <property type="term" value="F:4 iron, 4 sulfur cluster binding"/>
    <property type="evidence" value="ECO:0007669"/>
    <property type="project" value="UniProtKB-UniRule"/>
</dbReference>
<dbReference type="GO" id="GO:0051745">
    <property type="term" value="F:4-hydroxy-3-methylbut-2-enyl diphosphate reductase activity"/>
    <property type="evidence" value="ECO:0007669"/>
    <property type="project" value="UniProtKB-UniRule"/>
</dbReference>
<dbReference type="GO" id="GO:0046872">
    <property type="term" value="F:metal ion binding"/>
    <property type="evidence" value="ECO:0007669"/>
    <property type="project" value="UniProtKB-KW"/>
</dbReference>
<dbReference type="GO" id="GO:0050992">
    <property type="term" value="P:dimethylallyl diphosphate biosynthetic process"/>
    <property type="evidence" value="ECO:0007669"/>
    <property type="project" value="UniProtKB-UniRule"/>
</dbReference>
<dbReference type="GO" id="GO:0019288">
    <property type="term" value="P:isopentenyl diphosphate biosynthetic process, methylerythritol 4-phosphate pathway"/>
    <property type="evidence" value="ECO:0007669"/>
    <property type="project" value="UniProtKB-UniRule"/>
</dbReference>
<dbReference type="GO" id="GO:0016114">
    <property type="term" value="P:terpenoid biosynthetic process"/>
    <property type="evidence" value="ECO:0007669"/>
    <property type="project" value="UniProtKB-UniRule"/>
</dbReference>
<dbReference type="CDD" id="cd13944">
    <property type="entry name" value="lytB_ispH"/>
    <property type="match status" value="1"/>
</dbReference>
<dbReference type="FunFam" id="3.40.50.11270:FF:000001">
    <property type="entry name" value="4-hydroxy-3-methylbut-2-enyl diphosphate reductase"/>
    <property type="match status" value="1"/>
</dbReference>
<dbReference type="Gene3D" id="3.40.50.11270">
    <property type="match status" value="1"/>
</dbReference>
<dbReference type="Gene3D" id="3.40.1010.20">
    <property type="entry name" value="4-hydroxy-3-methylbut-2-enyl diphosphate reductase, catalytic domain"/>
    <property type="match status" value="2"/>
</dbReference>
<dbReference type="HAMAP" id="MF_00191">
    <property type="entry name" value="IspH"/>
    <property type="match status" value="1"/>
</dbReference>
<dbReference type="InterPro" id="IPR003451">
    <property type="entry name" value="LytB/IspH"/>
</dbReference>
<dbReference type="NCBIfam" id="TIGR00216">
    <property type="entry name" value="ispH_lytB"/>
    <property type="match status" value="1"/>
</dbReference>
<dbReference type="NCBIfam" id="NF002188">
    <property type="entry name" value="PRK01045.1-2"/>
    <property type="match status" value="1"/>
</dbReference>
<dbReference type="NCBIfam" id="NF002190">
    <property type="entry name" value="PRK01045.1-4"/>
    <property type="match status" value="1"/>
</dbReference>
<dbReference type="PANTHER" id="PTHR30426">
    <property type="entry name" value="4-HYDROXY-3-METHYLBUT-2-ENYL DIPHOSPHATE REDUCTASE"/>
    <property type="match status" value="1"/>
</dbReference>
<dbReference type="PANTHER" id="PTHR30426:SF0">
    <property type="entry name" value="4-HYDROXY-3-METHYLBUT-2-ENYL DIPHOSPHATE REDUCTASE"/>
    <property type="match status" value="1"/>
</dbReference>
<dbReference type="Pfam" id="PF02401">
    <property type="entry name" value="LYTB"/>
    <property type="match status" value="1"/>
</dbReference>
<feature type="chain" id="PRO_1000098993" description="4-hydroxy-3-methylbut-2-enyl diphosphate reductase">
    <location>
        <begin position="1"/>
        <end position="317"/>
    </location>
</feature>
<feature type="active site" description="Proton donor" evidence="1">
    <location>
        <position position="127"/>
    </location>
</feature>
<feature type="binding site" evidence="1">
    <location>
        <position position="12"/>
    </location>
    <ligand>
        <name>[4Fe-4S] cluster</name>
        <dbReference type="ChEBI" id="CHEBI:49883"/>
    </ligand>
</feature>
<feature type="binding site" evidence="1">
    <location>
        <position position="41"/>
    </location>
    <ligand>
        <name>(2E)-4-hydroxy-3-methylbut-2-enyl diphosphate</name>
        <dbReference type="ChEBI" id="CHEBI:128753"/>
    </ligand>
</feature>
<feature type="binding site" evidence="1">
    <location>
        <position position="41"/>
    </location>
    <ligand>
        <name>dimethylallyl diphosphate</name>
        <dbReference type="ChEBI" id="CHEBI:57623"/>
    </ligand>
</feature>
<feature type="binding site" evidence="1">
    <location>
        <position position="41"/>
    </location>
    <ligand>
        <name>isopentenyl diphosphate</name>
        <dbReference type="ChEBI" id="CHEBI:128769"/>
    </ligand>
</feature>
<feature type="binding site" evidence="1">
    <location>
        <position position="74"/>
    </location>
    <ligand>
        <name>(2E)-4-hydroxy-3-methylbut-2-enyl diphosphate</name>
        <dbReference type="ChEBI" id="CHEBI:128753"/>
    </ligand>
</feature>
<feature type="binding site" evidence="1">
    <location>
        <position position="74"/>
    </location>
    <ligand>
        <name>dimethylallyl diphosphate</name>
        <dbReference type="ChEBI" id="CHEBI:57623"/>
    </ligand>
</feature>
<feature type="binding site" evidence="1">
    <location>
        <position position="74"/>
    </location>
    <ligand>
        <name>isopentenyl diphosphate</name>
        <dbReference type="ChEBI" id="CHEBI:128769"/>
    </ligand>
</feature>
<feature type="binding site" evidence="1">
    <location>
        <position position="97"/>
    </location>
    <ligand>
        <name>[4Fe-4S] cluster</name>
        <dbReference type="ChEBI" id="CHEBI:49883"/>
    </ligand>
</feature>
<feature type="binding site" evidence="1">
    <location>
        <position position="125"/>
    </location>
    <ligand>
        <name>(2E)-4-hydroxy-3-methylbut-2-enyl diphosphate</name>
        <dbReference type="ChEBI" id="CHEBI:128753"/>
    </ligand>
</feature>
<feature type="binding site" evidence="1">
    <location>
        <position position="125"/>
    </location>
    <ligand>
        <name>dimethylallyl diphosphate</name>
        <dbReference type="ChEBI" id="CHEBI:57623"/>
    </ligand>
</feature>
<feature type="binding site" evidence="1">
    <location>
        <position position="125"/>
    </location>
    <ligand>
        <name>isopentenyl diphosphate</name>
        <dbReference type="ChEBI" id="CHEBI:128769"/>
    </ligand>
</feature>
<feature type="binding site" evidence="1">
    <location>
        <position position="168"/>
    </location>
    <ligand>
        <name>(2E)-4-hydroxy-3-methylbut-2-enyl diphosphate</name>
        <dbReference type="ChEBI" id="CHEBI:128753"/>
    </ligand>
</feature>
<feature type="binding site" evidence="1">
    <location>
        <position position="198"/>
    </location>
    <ligand>
        <name>[4Fe-4S] cluster</name>
        <dbReference type="ChEBI" id="CHEBI:49883"/>
    </ligand>
</feature>
<feature type="binding site" evidence="1">
    <location>
        <position position="226"/>
    </location>
    <ligand>
        <name>(2E)-4-hydroxy-3-methylbut-2-enyl diphosphate</name>
        <dbReference type="ChEBI" id="CHEBI:128753"/>
    </ligand>
</feature>
<feature type="binding site" evidence="1">
    <location>
        <position position="226"/>
    </location>
    <ligand>
        <name>dimethylallyl diphosphate</name>
        <dbReference type="ChEBI" id="CHEBI:57623"/>
    </ligand>
</feature>
<feature type="binding site" evidence="1">
    <location>
        <position position="226"/>
    </location>
    <ligand>
        <name>isopentenyl diphosphate</name>
        <dbReference type="ChEBI" id="CHEBI:128769"/>
    </ligand>
</feature>
<feature type="binding site" evidence="1">
    <location>
        <position position="227"/>
    </location>
    <ligand>
        <name>(2E)-4-hydroxy-3-methylbut-2-enyl diphosphate</name>
        <dbReference type="ChEBI" id="CHEBI:128753"/>
    </ligand>
</feature>
<feature type="binding site" evidence="1">
    <location>
        <position position="227"/>
    </location>
    <ligand>
        <name>dimethylallyl diphosphate</name>
        <dbReference type="ChEBI" id="CHEBI:57623"/>
    </ligand>
</feature>
<feature type="binding site" evidence="1">
    <location>
        <position position="227"/>
    </location>
    <ligand>
        <name>isopentenyl diphosphate</name>
        <dbReference type="ChEBI" id="CHEBI:128769"/>
    </ligand>
</feature>
<feature type="binding site" evidence="1">
    <location>
        <position position="228"/>
    </location>
    <ligand>
        <name>(2E)-4-hydroxy-3-methylbut-2-enyl diphosphate</name>
        <dbReference type="ChEBI" id="CHEBI:128753"/>
    </ligand>
</feature>
<feature type="binding site" evidence="1">
    <location>
        <position position="228"/>
    </location>
    <ligand>
        <name>dimethylallyl diphosphate</name>
        <dbReference type="ChEBI" id="CHEBI:57623"/>
    </ligand>
</feature>
<feature type="binding site" evidence="1">
    <location>
        <position position="228"/>
    </location>
    <ligand>
        <name>isopentenyl diphosphate</name>
        <dbReference type="ChEBI" id="CHEBI:128769"/>
    </ligand>
</feature>
<feature type="binding site" evidence="1">
    <location>
        <position position="270"/>
    </location>
    <ligand>
        <name>(2E)-4-hydroxy-3-methylbut-2-enyl diphosphate</name>
        <dbReference type="ChEBI" id="CHEBI:128753"/>
    </ligand>
</feature>
<feature type="binding site" evidence="1">
    <location>
        <position position="270"/>
    </location>
    <ligand>
        <name>dimethylallyl diphosphate</name>
        <dbReference type="ChEBI" id="CHEBI:57623"/>
    </ligand>
</feature>
<feature type="binding site" evidence="1">
    <location>
        <position position="270"/>
    </location>
    <ligand>
        <name>isopentenyl diphosphate</name>
        <dbReference type="ChEBI" id="CHEBI:128769"/>
    </ligand>
</feature>
<organism>
    <name type="scientific">Yersinia pseudotuberculosis serotype IB (strain PB1/+)</name>
    <dbReference type="NCBI Taxonomy" id="502801"/>
    <lineage>
        <taxon>Bacteria</taxon>
        <taxon>Pseudomonadati</taxon>
        <taxon>Pseudomonadota</taxon>
        <taxon>Gammaproteobacteria</taxon>
        <taxon>Enterobacterales</taxon>
        <taxon>Yersiniaceae</taxon>
        <taxon>Yersinia</taxon>
    </lineage>
</organism>